<name>PAND_CHLL2</name>
<gene>
    <name evidence="1" type="primary">panD</name>
    <name type="ordered locus">Clim_0310</name>
</gene>
<dbReference type="EC" id="4.1.1.11" evidence="1"/>
<dbReference type="EMBL" id="CP001097">
    <property type="protein sequence ID" value="ACD89404.1"/>
    <property type="molecule type" value="Genomic_DNA"/>
</dbReference>
<dbReference type="RefSeq" id="WP_012465285.1">
    <property type="nucleotide sequence ID" value="NC_010803.1"/>
</dbReference>
<dbReference type="SMR" id="B3EFC1"/>
<dbReference type="STRING" id="290315.Clim_0310"/>
<dbReference type="KEGG" id="cli:Clim_0310"/>
<dbReference type="eggNOG" id="COG0853">
    <property type="taxonomic scope" value="Bacteria"/>
</dbReference>
<dbReference type="HOGENOM" id="CLU_115305_2_0_10"/>
<dbReference type="OrthoDB" id="9803983at2"/>
<dbReference type="UniPathway" id="UPA00028">
    <property type="reaction ID" value="UER00002"/>
</dbReference>
<dbReference type="Proteomes" id="UP000008841">
    <property type="component" value="Chromosome"/>
</dbReference>
<dbReference type="GO" id="GO:0005829">
    <property type="term" value="C:cytosol"/>
    <property type="evidence" value="ECO:0007669"/>
    <property type="project" value="TreeGrafter"/>
</dbReference>
<dbReference type="GO" id="GO:0004068">
    <property type="term" value="F:aspartate 1-decarboxylase activity"/>
    <property type="evidence" value="ECO:0007669"/>
    <property type="project" value="UniProtKB-UniRule"/>
</dbReference>
<dbReference type="GO" id="GO:0006523">
    <property type="term" value="P:alanine biosynthetic process"/>
    <property type="evidence" value="ECO:0007669"/>
    <property type="project" value="InterPro"/>
</dbReference>
<dbReference type="GO" id="GO:0015940">
    <property type="term" value="P:pantothenate biosynthetic process"/>
    <property type="evidence" value="ECO:0007669"/>
    <property type="project" value="UniProtKB-UniRule"/>
</dbReference>
<dbReference type="CDD" id="cd06919">
    <property type="entry name" value="Asp_decarbox"/>
    <property type="match status" value="1"/>
</dbReference>
<dbReference type="Gene3D" id="2.40.40.20">
    <property type="match status" value="1"/>
</dbReference>
<dbReference type="HAMAP" id="MF_00446">
    <property type="entry name" value="PanD"/>
    <property type="match status" value="1"/>
</dbReference>
<dbReference type="InterPro" id="IPR009010">
    <property type="entry name" value="Asp_de-COase-like_dom_sf"/>
</dbReference>
<dbReference type="InterPro" id="IPR003190">
    <property type="entry name" value="Asp_decarbox"/>
</dbReference>
<dbReference type="NCBIfam" id="TIGR00223">
    <property type="entry name" value="panD"/>
    <property type="match status" value="1"/>
</dbReference>
<dbReference type="PANTHER" id="PTHR21012">
    <property type="entry name" value="ASPARTATE 1-DECARBOXYLASE"/>
    <property type="match status" value="1"/>
</dbReference>
<dbReference type="PANTHER" id="PTHR21012:SF0">
    <property type="entry name" value="ASPARTATE 1-DECARBOXYLASE"/>
    <property type="match status" value="1"/>
</dbReference>
<dbReference type="Pfam" id="PF02261">
    <property type="entry name" value="Asp_decarbox"/>
    <property type="match status" value="1"/>
</dbReference>
<dbReference type="PIRSF" id="PIRSF006246">
    <property type="entry name" value="Asp_decarbox"/>
    <property type="match status" value="1"/>
</dbReference>
<dbReference type="SUPFAM" id="SSF50692">
    <property type="entry name" value="ADC-like"/>
    <property type="match status" value="1"/>
</dbReference>
<feature type="chain" id="PRO_1000191948" description="Aspartate 1-decarboxylase beta chain" evidence="1">
    <location>
        <begin position="1"/>
        <end position="24"/>
    </location>
</feature>
<feature type="chain" id="PRO_1000191949" description="Aspartate 1-decarboxylase alpha chain" evidence="1">
    <location>
        <begin position="25"/>
        <end position="128"/>
    </location>
</feature>
<feature type="active site" description="Schiff-base intermediate with substrate; via pyruvic acid" evidence="1">
    <location>
        <position position="25"/>
    </location>
</feature>
<feature type="active site" description="Proton donor" evidence="1">
    <location>
        <position position="58"/>
    </location>
</feature>
<feature type="binding site" evidence="1">
    <location>
        <position position="57"/>
    </location>
    <ligand>
        <name>substrate</name>
    </ligand>
</feature>
<feature type="binding site" evidence="1">
    <location>
        <begin position="73"/>
        <end position="75"/>
    </location>
    <ligand>
        <name>substrate</name>
    </ligand>
</feature>
<feature type="modified residue" description="Pyruvic acid (Ser)" evidence="1">
    <location>
        <position position="25"/>
    </location>
</feature>
<comment type="function">
    <text evidence="1">Catalyzes the pyruvoyl-dependent decarboxylation of aspartate to produce beta-alanine.</text>
</comment>
<comment type="catalytic activity">
    <reaction evidence="1">
        <text>L-aspartate + H(+) = beta-alanine + CO2</text>
        <dbReference type="Rhea" id="RHEA:19497"/>
        <dbReference type="ChEBI" id="CHEBI:15378"/>
        <dbReference type="ChEBI" id="CHEBI:16526"/>
        <dbReference type="ChEBI" id="CHEBI:29991"/>
        <dbReference type="ChEBI" id="CHEBI:57966"/>
        <dbReference type="EC" id="4.1.1.11"/>
    </reaction>
</comment>
<comment type="cofactor">
    <cofactor evidence="1">
        <name>pyruvate</name>
        <dbReference type="ChEBI" id="CHEBI:15361"/>
    </cofactor>
    <text evidence="1">Binds 1 pyruvoyl group covalently per subunit.</text>
</comment>
<comment type="pathway">
    <text evidence="1">Cofactor biosynthesis; (R)-pantothenate biosynthesis; beta-alanine from L-aspartate: step 1/1.</text>
</comment>
<comment type="subunit">
    <text evidence="1">Heterooctamer of four alpha and four beta subunits.</text>
</comment>
<comment type="subcellular location">
    <subcellularLocation>
        <location evidence="1">Cytoplasm</location>
    </subcellularLocation>
</comment>
<comment type="PTM">
    <text evidence="1">Is synthesized initially as an inactive proenzyme, which is activated by self-cleavage at a specific serine bond to produce a beta-subunit with a hydroxyl group at its C-terminus and an alpha-subunit with a pyruvoyl group at its N-terminus.</text>
</comment>
<comment type="similarity">
    <text evidence="1">Belongs to the PanD family.</text>
</comment>
<protein>
    <recommendedName>
        <fullName evidence="1">Aspartate 1-decarboxylase</fullName>
        <ecNumber evidence="1">4.1.1.11</ecNumber>
    </recommendedName>
    <alternativeName>
        <fullName evidence="1">Aspartate alpha-decarboxylase</fullName>
    </alternativeName>
    <component>
        <recommendedName>
            <fullName evidence="1">Aspartate 1-decarboxylase beta chain</fullName>
        </recommendedName>
    </component>
    <component>
        <recommendedName>
            <fullName evidence="1">Aspartate 1-decarboxylase alpha chain</fullName>
        </recommendedName>
    </component>
</protein>
<keyword id="KW-0068">Autocatalytic cleavage</keyword>
<keyword id="KW-0963">Cytoplasm</keyword>
<keyword id="KW-0210">Decarboxylase</keyword>
<keyword id="KW-0456">Lyase</keyword>
<keyword id="KW-0566">Pantothenate biosynthesis</keyword>
<keyword id="KW-0670">Pyruvate</keyword>
<keyword id="KW-0704">Schiff base</keyword>
<keyword id="KW-0865">Zymogen</keyword>
<reference key="1">
    <citation type="submission" date="2008-05" db="EMBL/GenBank/DDBJ databases">
        <title>Complete sequence of Chlorobium limicola DSM 245.</title>
        <authorList>
            <consortium name="US DOE Joint Genome Institute"/>
            <person name="Lucas S."/>
            <person name="Copeland A."/>
            <person name="Lapidus A."/>
            <person name="Glavina del Rio T."/>
            <person name="Dalin E."/>
            <person name="Tice H."/>
            <person name="Bruce D."/>
            <person name="Goodwin L."/>
            <person name="Pitluck S."/>
            <person name="Schmutz J."/>
            <person name="Larimer F."/>
            <person name="Land M."/>
            <person name="Hauser L."/>
            <person name="Kyrpides N."/>
            <person name="Ovchinnikova G."/>
            <person name="Zhao F."/>
            <person name="Li T."/>
            <person name="Liu Z."/>
            <person name="Overmann J."/>
            <person name="Bryant D.A."/>
            <person name="Richardson P."/>
        </authorList>
    </citation>
    <scope>NUCLEOTIDE SEQUENCE [LARGE SCALE GENOMIC DNA]</scope>
    <source>
        <strain>DSM 245 / NBRC 103803 / 6330</strain>
    </source>
</reference>
<organism>
    <name type="scientific">Chlorobium limicola (strain DSM 245 / NBRC 103803 / 6330)</name>
    <dbReference type="NCBI Taxonomy" id="290315"/>
    <lineage>
        <taxon>Bacteria</taxon>
        <taxon>Pseudomonadati</taxon>
        <taxon>Chlorobiota</taxon>
        <taxon>Chlorobiia</taxon>
        <taxon>Chlorobiales</taxon>
        <taxon>Chlorobiaceae</taxon>
        <taxon>Chlorobium/Pelodictyon group</taxon>
        <taxon>Chlorobium</taxon>
    </lineage>
</organism>
<proteinExistence type="inferred from homology"/>
<accession>B3EFC1</accession>
<evidence type="ECO:0000255" key="1">
    <source>
        <dbReference type="HAMAP-Rule" id="MF_00446"/>
    </source>
</evidence>
<sequence length="128" mass="14333">MKLHLLKSKIHNAIVTSGDLEYEGSITIDSELLEMAQMIPNEKVLVVNNNNGERFETYIIKGDYGSRVIQLNGAAARCALPGDEIIIMTFAVMDEKEAGSHKPMVLIVDRNNNPKRRHRVGEEDELLS</sequence>